<feature type="chain" id="PRO_1000073238" description="DNA-directed RNA polymerase subunit beta">
    <location>
        <begin position="1"/>
        <end position="1202"/>
    </location>
</feature>
<feature type="region of interest" description="Disordered" evidence="2">
    <location>
        <begin position="1154"/>
        <end position="1202"/>
    </location>
</feature>
<feature type="compositionally biased region" description="Basic and acidic residues" evidence="2">
    <location>
        <begin position="1171"/>
        <end position="1188"/>
    </location>
</feature>
<gene>
    <name evidence="1" type="primary">rpoB</name>
    <name type="ordered locus">Lreu_1492</name>
</gene>
<proteinExistence type="inferred from homology"/>
<evidence type="ECO:0000255" key="1">
    <source>
        <dbReference type="HAMAP-Rule" id="MF_01321"/>
    </source>
</evidence>
<evidence type="ECO:0000256" key="2">
    <source>
        <dbReference type="SAM" id="MobiDB-lite"/>
    </source>
</evidence>
<keyword id="KW-0240">DNA-directed RNA polymerase</keyword>
<keyword id="KW-0548">Nucleotidyltransferase</keyword>
<keyword id="KW-1185">Reference proteome</keyword>
<keyword id="KW-0804">Transcription</keyword>
<keyword id="KW-0808">Transferase</keyword>
<accession>A5VLL4</accession>
<name>RPOB_LIMRD</name>
<dbReference type="EC" id="2.7.7.6" evidence="1"/>
<dbReference type="EMBL" id="CP000705">
    <property type="protein sequence ID" value="ABQ83738.1"/>
    <property type="molecule type" value="Genomic_DNA"/>
</dbReference>
<dbReference type="SMR" id="A5VLL4"/>
<dbReference type="STRING" id="557436.Lreu_1492"/>
<dbReference type="KEGG" id="lre:Lreu_1492"/>
<dbReference type="PATRIC" id="fig|557436.17.peg.131"/>
<dbReference type="eggNOG" id="COG0085">
    <property type="taxonomic scope" value="Bacteria"/>
</dbReference>
<dbReference type="HOGENOM" id="CLU_000524_4_1_9"/>
<dbReference type="Proteomes" id="UP000001991">
    <property type="component" value="Chromosome"/>
</dbReference>
<dbReference type="GO" id="GO:0000428">
    <property type="term" value="C:DNA-directed RNA polymerase complex"/>
    <property type="evidence" value="ECO:0007669"/>
    <property type="project" value="UniProtKB-KW"/>
</dbReference>
<dbReference type="GO" id="GO:0003677">
    <property type="term" value="F:DNA binding"/>
    <property type="evidence" value="ECO:0007669"/>
    <property type="project" value="UniProtKB-UniRule"/>
</dbReference>
<dbReference type="GO" id="GO:0003899">
    <property type="term" value="F:DNA-directed RNA polymerase activity"/>
    <property type="evidence" value="ECO:0007669"/>
    <property type="project" value="UniProtKB-UniRule"/>
</dbReference>
<dbReference type="GO" id="GO:0032549">
    <property type="term" value="F:ribonucleoside binding"/>
    <property type="evidence" value="ECO:0007669"/>
    <property type="project" value="InterPro"/>
</dbReference>
<dbReference type="GO" id="GO:0006351">
    <property type="term" value="P:DNA-templated transcription"/>
    <property type="evidence" value="ECO:0007669"/>
    <property type="project" value="UniProtKB-UniRule"/>
</dbReference>
<dbReference type="CDD" id="cd00653">
    <property type="entry name" value="RNA_pol_B_RPB2"/>
    <property type="match status" value="1"/>
</dbReference>
<dbReference type="FunFam" id="3.90.1800.10:FF:000001">
    <property type="entry name" value="DNA-directed RNA polymerase subunit beta"/>
    <property type="match status" value="1"/>
</dbReference>
<dbReference type="Gene3D" id="2.40.50.100">
    <property type="match status" value="1"/>
</dbReference>
<dbReference type="Gene3D" id="2.40.50.150">
    <property type="match status" value="1"/>
</dbReference>
<dbReference type="Gene3D" id="3.90.1100.10">
    <property type="match status" value="2"/>
</dbReference>
<dbReference type="Gene3D" id="2.30.150.10">
    <property type="entry name" value="DNA-directed RNA polymerase, beta subunit, external 1 domain"/>
    <property type="match status" value="1"/>
</dbReference>
<dbReference type="Gene3D" id="2.40.270.10">
    <property type="entry name" value="DNA-directed RNA polymerase, subunit 2, domain 6"/>
    <property type="match status" value="1"/>
</dbReference>
<dbReference type="Gene3D" id="3.90.1800.10">
    <property type="entry name" value="RNA polymerase alpha subunit dimerisation domain"/>
    <property type="match status" value="1"/>
</dbReference>
<dbReference type="Gene3D" id="3.90.1110.10">
    <property type="entry name" value="RNA polymerase Rpb2, domain 2"/>
    <property type="match status" value="1"/>
</dbReference>
<dbReference type="HAMAP" id="MF_01321">
    <property type="entry name" value="RNApol_bact_RpoB"/>
    <property type="match status" value="1"/>
</dbReference>
<dbReference type="InterPro" id="IPR042107">
    <property type="entry name" value="DNA-dir_RNA_pol_bsu_ext_1_sf"/>
</dbReference>
<dbReference type="InterPro" id="IPR019462">
    <property type="entry name" value="DNA-dir_RNA_pol_bsu_external_1"/>
</dbReference>
<dbReference type="InterPro" id="IPR015712">
    <property type="entry name" value="DNA-dir_RNA_pol_su2"/>
</dbReference>
<dbReference type="InterPro" id="IPR007120">
    <property type="entry name" value="DNA-dir_RNAP_su2_dom"/>
</dbReference>
<dbReference type="InterPro" id="IPR037033">
    <property type="entry name" value="DNA-dir_RNAP_su2_hyb_sf"/>
</dbReference>
<dbReference type="InterPro" id="IPR010243">
    <property type="entry name" value="RNA_pol_bsu_bac"/>
</dbReference>
<dbReference type="InterPro" id="IPR007121">
    <property type="entry name" value="RNA_pol_bsu_CS"/>
</dbReference>
<dbReference type="InterPro" id="IPR007644">
    <property type="entry name" value="RNA_pol_bsu_protrusion"/>
</dbReference>
<dbReference type="InterPro" id="IPR007642">
    <property type="entry name" value="RNA_pol_Rpb2_2"/>
</dbReference>
<dbReference type="InterPro" id="IPR037034">
    <property type="entry name" value="RNA_pol_Rpb2_2_sf"/>
</dbReference>
<dbReference type="InterPro" id="IPR007645">
    <property type="entry name" value="RNA_pol_Rpb2_3"/>
</dbReference>
<dbReference type="InterPro" id="IPR007641">
    <property type="entry name" value="RNA_pol_Rpb2_7"/>
</dbReference>
<dbReference type="InterPro" id="IPR014724">
    <property type="entry name" value="RNA_pol_RPB2_OB-fold"/>
</dbReference>
<dbReference type="NCBIfam" id="NF001616">
    <property type="entry name" value="PRK00405.1"/>
    <property type="match status" value="1"/>
</dbReference>
<dbReference type="NCBIfam" id="TIGR02013">
    <property type="entry name" value="rpoB"/>
    <property type="match status" value="1"/>
</dbReference>
<dbReference type="PANTHER" id="PTHR20856">
    <property type="entry name" value="DNA-DIRECTED RNA POLYMERASE I SUBUNIT 2"/>
    <property type="match status" value="1"/>
</dbReference>
<dbReference type="Pfam" id="PF04563">
    <property type="entry name" value="RNA_pol_Rpb2_1"/>
    <property type="match status" value="1"/>
</dbReference>
<dbReference type="Pfam" id="PF04561">
    <property type="entry name" value="RNA_pol_Rpb2_2"/>
    <property type="match status" value="2"/>
</dbReference>
<dbReference type="Pfam" id="PF04565">
    <property type="entry name" value="RNA_pol_Rpb2_3"/>
    <property type="match status" value="1"/>
</dbReference>
<dbReference type="Pfam" id="PF10385">
    <property type="entry name" value="RNA_pol_Rpb2_45"/>
    <property type="match status" value="1"/>
</dbReference>
<dbReference type="Pfam" id="PF00562">
    <property type="entry name" value="RNA_pol_Rpb2_6"/>
    <property type="match status" value="1"/>
</dbReference>
<dbReference type="Pfam" id="PF04560">
    <property type="entry name" value="RNA_pol_Rpb2_7"/>
    <property type="match status" value="1"/>
</dbReference>
<dbReference type="SUPFAM" id="SSF64484">
    <property type="entry name" value="beta and beta-prime subunits of DNA dependent RNA-polymerase"/>
    <property type="match status" value="1"/>
</dbReference>
<dbReference type="PROSITE" id="PS01166">
    <property type="entry name" value="RNA_POL_BETA"/>
    <property type="match status" value="1"/>
</dbReference>
<organism>
    <name type="scientific">Limosilactobacillus reuteri (strain DSM 20016)</name>
    <name type="common">Lactobacillus reuteri</name>
    <dbReference type="NCBI Taxonomy" id="557436"/>
    <lineage>
        <taxon>Bacteria</taxon>
        <taxon>Bacillati</taxon>
        <taxon>Bacillota</taxon>
        <taxon>Bacilli</taxon>
        <taxon>Lactobacillales</taxon>
        <taxon>Lactobacillaceae</taxon>
        <taxon>Limosilactobacillus</taxon>
    </lineage>
</organism>
<comment type="function">
    <text evidence="1">DNA-dependent RNA polymerase catalyzes the transcription of DNA into RNA using the four ribonucleoside triphosphates as substrates.</text>
</comment>
<comment type="catalytic activity">
    <reaction evidence="1">
        <text>RNA(n) + a ribonucleoside 5'-triphosphate = RNA(n+1) + diphosphate</text>
        <dbReference type="Rhea" id="RHEA:21248"/>
        <dbReference type="Rhea" id="RHEA-COMP:14527"/>
        <dbReference type="Rhea" id="RHEA-COMP:17342"/>
        <dbReference type="ChEBI" id="CHEBI:33019"/>
        <dbReference type="ChEBI" id="CHEBI:61557"/>
        <dbReference type="ChEBI" id="CHEBI:140395"/>
        <dbReference type="EC" id="2.7.7.6"/>
    </reaction>
</comment>
<comment type="subunit">
    <text evidence="1">The RNAP catalytic core consists of 2 alpha, 1 beta, 1 beta' and 1 omega subunit. When a sigma factor is associated with the core the holoenzyme is formed, which can initiate transcription.</text>
</comment>
<comment type="similarity">
    <text evidence="1">Belongs to the RNA polymerase beta chain family.</text>
</comment>
<reference key="1">
    <citation type="journal article" date="2011" name="PLoS Genet.">
        <title>The evolution of host specialization in the vertebrate gut symbiont Lactobacillus reuteri.</title>
        <authorList>
            <person name="Frese S.A."/>
            <person name="Benson A.K."/>
            <person name="Tannock G.W."/>
            <person name="Loach D.M."/>
            <person name="Kim J."/>
            <person name="Zhang M."/>
            <person name="Oh P.L."/>
            <person name="Heng N.C."/>
            <person name="Patil P.B."/>
            <person name="Juge N."/>
            <person name="Mackenzie D.A."/>
            <person name="Pearson B.M."/>
            <person name="Lapidus A."/>
            <person name="Dalin E."/>
            <person name="Tice H."/>
            <person name="Goltsman E."/>
            <person name="Land M."/>
            <person name="Hauser L."/>
            <person name="Ivanova N."/>
            <person name="Kyrpides N.C."/>
            <person name="Walter J."/>
        </authorList>
    </citation>
    <scope>NUCLEOTIDE SEQUENCE [LARGE SCALE GENOMIC DNA]</scope>
    <source>
        <strain>DSM 20016</strain>
    </source>
</reference>
<sequence>MAGHLVKYGKHRTRRSYSRIKEVLELPNLIEIQTDSYNWFMEKGLREMFDDIMPIDDFQGKLSLEFVDYQLLEPKYTVDEAREHDANYSAPLHVTLRLTNHETGEIKSQDVFFGDFPLMTDQGTFIINGAERVIVSQLVRSPGVYYSEENDKNGRPNYGATFIPNRGAWLEYETDAKNVSYVRIDRTRKLPMTELIRALGFGSDDEIIDMFGGDSETLSLTLDKDVHKNAEDSRVEEALKDIYERLRPGEPKTADSARSLLTARFFDPKRYDMAPVGRYKTNKKLMLKYRLLGQTLAETLADPDTGEVLAQKGDTVTKELLNKLEPYLDRDDFKTITYTPSDEAVVTEPVKLQKILVYSKNDPDRVVPIIGNGHIPLEYKHIEPADILASLNYFFNLQEGIGSTDDIDHLGNRRIRSVGELLQNQFRIGLARMERVVRERMSIQDPDTVTPQQLINIRPVVASIKEFFGSSQLSQFMDQTNPLGELTHKRRLSALGPGGLTRDRAGYEVRDVHYTHYGRMCPIETPEGPNIGLINSLSSYARVNKYGFIETPYRRVSWKDHKVTDKIDYLTADEEDNFIIAQANTPLNDDGSFVDDQVMARDKDDYIETSVENIDYMDVSPKQVVSVASACIPFLENDDSNRALMGANMQRQAVPLINPHAPLVSTGIDYKAAHDSGVAMIAKKPGTVEYVDAREVRVREEDGTLDTYKLMKFRRSNGGKNYNQRPIVKVGEHVDADDVLADGPSMEQGELALGQNPLIAFMTWQGYNFEDAIAINERLVKDDVYTSIHIESYESEARETKLGPEEMTREIPNVGDDALKDLDENGIVRVGAEVHDGDILVGKVTPKGMTELSAEERLLHAIFGEKSREVRDTSLRVPHGGGGIIQDVKVFTRENGDELSPGVNTMVRVYIAQKRKIQVGDKMSGRHGNKGTVSIVVPEEDMPYMPDGTPIDIMLSPMGVPSRMNIGQLLELHLGMAARRLGIHMATPVFDGASDKDVWDAVRESGFPEDGKTILYDGRTGEPFENRIAVGSMHYLKLAHMVDDKIHARSTGPYSLVTQQPLGGKAQFGGQRFGEMEVWALEAYGAAYTLQEILTYKSDDTVGRVRTYDAIINGQPIPKPGVPESFRVLVKELQALGLDMKVLDGNNKEIQLKNMDEDDDEVVNVDALAKYAEEHKADDKKNEEENKSEATSTTTDDKTNQN</sequence>
<protein>
    <recommendedName>
        <fullName evidence="1">DNA-directed RNA polymerase subunit beta</fullName>
        <shortName evidence="1">RNAP subunit beta</shortName>
        <ecNumber evidence="1">2.7.7.6</ecNumber>
    </recommendedName>
    <alternativeName>
        <fullName evidence="1">RNA polymerase subunit beta</fullName>
    </alternativeName>
    <alternativeName>
        <fullName evidence="1">Transcriptase subunit beta</fullName>
    </alternativeName>
</protein>